<accession>P78027</accession>
<gene>
    <name type="primary">nrdE</name>
    <name type="ordered locus">MPN_324</name>
    <name type="ORF">MP512</name>
</gene>
<comment type="function">
    <text evidence="1">Provides the precursors necessary for DNA synthesis. Catalyzes the biosynthesis of deoxyribonucleotides from the corresponding ribonucleotides (By similarity).</text>
</comment>
<comment type="catalytic activity">
    <reaction>
        <text>a 2'-deoxyribonucleoside 5'-diphosphate + [thioredoxin]-disulfide + H2O = a ribonucleoside 5'-diphosphate + [thioredoxin]-dithiol</text>
        <dbReference type="Rhea" id="RHEA:23252"/>
        <dbReference type="Rhea" id="RHEA-COMP:10698"/>
        <dbReference type="Rhea" id="RHEA-COMP:10700"/>
        <dbReference type="ChEBI" id="CHEBI:15377"/>
        <dbReference type="ChEBI" id="CHEBI:29950"/>
        <dbReference type="ChEBI" id="CHEBI:50058"/>
        <dbReference type="ChEBI" id="CHEBI:57930"/>
        <dbReference type="ChEBI" id="CHEBI:73316"/>
        <dbReference type="EC" id="1.17.4.1"/>
    </reaction>
</comment>
<comment type="activity regulation">
    <text evidence="1">Under complex allosteric control mediated by deoxynucleoside triphosphates and ATP binding. The type of nucleotide bound at the specificity site determines substrate preference. It seems probable that ATP makes the enzyme reduce CDP and UDP, dGTP favors ADP reduction and dTTP favors GDP reduction (By similarity).</text>
</comment>
<comment type="subunit">
    <text evidence="1">Tetramer of two alpha and two beta subunits.</text>
</comment>
<comment type="similarity">
    <text evidence="2">Belongs to the ribonucleoside diphosphate reductase large chain family.</text>
</comment>
<proteinExistence type="inferred from homology"/>
<feature type="chain" id="PRO_0000187218" description="Ribonucleoside-diphosphate reductase subunit alpha">
    <location>
        <begin position="1"/>
        <end position="721"/>
    </location>
</feature>
<feature type="active site" description="Proton acceptor" evidence="1">
    <location>
        <position position="384"/>
    </location>
</feature>
<feature type="active site" description="Cysteine radical intermediate" evidence="1">
    <location>
        <position position="386"/>
    </location>
</feature>
<feature type="active site" description="Proton acceptor" evidence="1">
    <location>
        <position position="388"/>
    </location>
</feature>
<feature type="binding site" evidence="1">
    <location>
        <position position="159"/>
    </location>
    <ligand>
        <name>substrate</name>
    </ligand>
</feature>
<feature type="binding site" evidence="1">
    <location>
        <begin position="175"/>
        <end position="176"/>
    </location>
    <ligand>
        <name>substrate</name>
    </ligand>
</feature>
<feature type="binding site" evidence="1">
    <location>
        <position position="204"/>
    </location>
    <ligand>
        <name>substrate</name>
    </ligand>
</feature>
<feature type="binding site" evidence="1">
    <location>
        <begin position="384"/>
        <end position="388"/>
    </location>
    <ligand>
        <name>substrate</name>
    </ligand>
</feature>
<feature type="binding site" evidence="1">
    <location>
        <begin position="589"/>
        <end position="593"/>
    </location>
    <ligand>
        <name>substrate</name>
    </ligand>
</feature>
<feature type="site" description="Important for hydrogen atom transfer" evidence="1">
    <location>
        <position position="176"/>
    </location>
</feature>
<feature type="site" description="Allosteric effector binding" evidence="1">
    <location>
        <position position="183"/>
    </location>
</feature>
<feature type="site" description="Allosteric effector binding" evidence="1">
    <location>
        <position position="213"/>
    </location>
</feature>
<feature type="site" description="Important for hydrogen atom transfer" evidence="1">
    <location>
        <position position="413"/>
    </location>
</feature>
<feature type="site" description="Important for electron transfer" evidence="1">
    <location>
        <position position="694"/>
    </location>
</feature>
<feature type="site" description="Important for electron transfer" evidence="1">
    <location>
        <position position="695"/>
    </location>
</feature>
<feature type="site" description="Interacts with thioredoxin/glutaredoxin" evidence="1">
    <location>
        <position position="716"/>
    </location>
</feature>
<feature type="site" description="Interacts with thioredoxin/glutaredoxin" evidence="1">
    <location>
        <position position="719"/>
    </location>
</feature>
<feature type="disulfide bond" description="Redox-active" evidence="1">
    <location>
        <begin position="176"/>
        <end position="413"/>
    </location>
</feature>
<keyword id="KW-0021">Allosteric enzyme</keyword>
<keyword id="KW-0067">ATP-binding</keyword>
<keyword id="KW-0215">Deoxyribonucleotide synthesis</keyword>
<keyword id="KW-1015">Disulfide bond</keyword>
<keyword id="KW-0547">Nucleotide-binding</keyword>
<keyword id="KW-0560">Oxidoreductase</keyword>
<keyword id="KW-1185">Reference proteome</keyword>
<sequence length="721" mass="82375">MSVKEKIPAFNTQEDLESYISLNAYTKVYGDFKMDLHAVEAYIQEHVKPKTKVFHSTKERLDFLVKNDYYDENIINMYSFEQFEEITRKAYAYRFRYANFMGAFKFYNAYALKTFDGKWYLENYEDRVVMNVLFLANGNYNKALKLLKQIITNRFQPATPTFLNAGRKKRGEFVSCYLLRIEDNMESIGRAITTTLQLSKRDGGVALLLTNIRESGAPIKKIENQSSGIIPIMKLLEDSFSYANQLGQRQGAGAVYLHAHHPDVMQFLDTKRENADEKIRIKSLSLGLVIPDITFTLAKNNEEMALFSPYDVYEEYGKPLSDISVTEMYYELLANQRIKKTFINARKFFQTVAELHFESGYPYILFDDTVNRRNAHPNRIVMSNLCSEIVQPSTPSEFHHDLAFKKVGNDISCNLGSLNIAKAMESGPEFSELVKLAIESLDLVSRVSNLETAPSIQKGNSENHALGLGAMNLHGFLATNQIYYNSPEAIDFTNIFFYTVAYHAFKASSELALEKGKFKNFENTKFADGSYFDKYIKVEPDFWTPKTERVKALFQKYQVEIPTRENWKELALNIQKNGLANSHLLAIAPTGSISYLSSCTPSLQPVVSPVEVRKEGRLGRIYVPAYQLNKDSYPFYKDGAYELGPEPIINIAAAAQQHVDQAISLTLFMTDKATTRDLNKAYIYAFKKGCSSIYYVRVRQEVLEDSEDHTIQMQQCEACVI</sequence>
<reference key="1">
    <citation type="journal article" date="1996" name="Nucleic Acids Res.">
        <title>Complete sequence analysis of the genome of the bacterium Mycoplasma pneumoniae.</title>
        <authorList>
            <person name="Himmelreich R."/>
            <person name="Hilbert H."/>
            <person name="Plagens H."/>
            <person name="Pirkl E."/>
            <person name="Li B.-C."/>
            <person name="Herrmann R."/>
        </authorList>
    </citation>
    <scope>NUCLEOTIDE SEQUENCE [LARGE SCALE GENOMIC DNA]</scope>
    <source>
        <strain>ATCC 29342 / M129 / Subtype 1</strain>
    </source>
</reference>
<name>RIR1_MYCPN</name>
<protein>
    <recommendedName>
        <fullName>Ribonucleoside-diphosphate reductase subunit alpha</fullName>
        <ecNumber>1.17.4.1</ecNumber>
    </recommendedName>
    <alternativeName>
        <fullName>Ribonucleotide reductase</fullName>
    </alternativeName>
</protein>
<organism>
    <name type="scientific">Mycoplasma pneumoniae (strain ATCC 29342 / M129 / Subtype 1)</name>
    <name type="common">Mycoplasmoides pneumoniae</name>
    <dbReference type="NCBI Taxonomy" id="272634"/>
    <lineage>
        <taxon>Bacteria</taxon>
        <taxon>Bacillati</taxon>
        <taxon>Mycoplasmatota</taxon>
        <taxon>Mycoplasmoidales</taxon>
        <taxon>Mycoplasmoidaceae</taxon>
        <taxon>Mycoplasmoides</taxon>
    </lineage>
</organism>
<dbReference type="EC" id="1.17.4.1"/>
<dbReference type="EMBL" id="U00089">
    <property type="protein sequence ID" value="AAB96160.1"/>
    <property type="molecule type" value="Genomic_DNA"/>
</dbReference>
<dbReference type="PIR" id="S73838">
    <property type="entry name" value="S73838"/>
</dbReference>
<dbReference type="RefSeq" id="NP_110012.1">
    <property type="nucleotide sequence ID" value="NC_000912.1"/>
</dbReference>
<dbReference type="RefSeq" id="WP_010874680.1">
    <property type="nucleotide sequence ID" value="NZ_OU342337.1"/>
</dbReference>
<dbReference type="SMR" id="P78027"/>
<dbReference type="IntAct" id="P78027">
    <property type="interactions" value="7"/>
</dbReference>
<dbReference type="STRING" id="272634.MPN_324"/>
<dbReference type="EnsemblBacteria" id="AAB96160">
    <property type="protein sequence ID" value="AAB96160"/>
    <property type="gene ID" value="MPN_324"/>
</dbReference>
<dbReference type="KEGG" id="mpn:MPN_324"/>
<dbReference type="PATRIC" id="fig|272634.6.peg.348"/>
<dbReference type="HOGENOM" id="CLU_000404_4_1_14"/>
<dbReference type="OrthoDB" id="9762933at2"/>
<dbReference type="BioCyc" id="MPNE272634:G1GJ3-515-MONOMER"/>
<dbReference type="Proteomes" id="UP000000808">
    <property type="component" value="Chromosome"/>
</dbReference>
<dbReference type="GO" id="GO:0005971">
    <property type="term" value="C:ribonucleoside-diphosphate reductase complex"/>
    <property type="evidence" value="ECO:0007669"/>
    <property type="project" value="TreeGrafter"/>
</dbReference>
<dbReference type="GO" id="GO:0005524">
    <property type="term" value="F:ATP binding"/>
    <property type="evidence" value="ECO:0007669"/>
    <property type="project" value="UniProtKB-KW"/>
</dbReference>
<dbReference type="GO" id="GO:0004748">
    <property type="term" value="F:ribonucleoside-diphosphate reductase activity, thioredoxin disulfide as acceptor"/>
    <property type="evidence" value="ECO:0007669"/>
    <property type="project" value="UniProtKB-EC"/>
</dbReference>
<dbReference type="GO" id="GO:0009263">
    <property type="term" value="P:deoxyribonucleotide biosynthetic process"/>
    <property type="evidence" value="ECO:0007669"/>
    <property type="project" value="UniProtKB-KW"/>
</dbReference>
<dbReference type="CDD" id="cd01679">
    <property type="entry name" value="RNR_I"/>
    <property type="match status" value="1"/>
</dbReference>
<dbReference type="FunFam" id="1.10.1650.20:FF:000002">
    <property type="entry name" value="Ribonucleoside-diphosphate reductase"/>
    <property type="match status" value="1"/>
</dbReference>
<dbReference type="Gene3D" id="1.10.1650.20">
    <property type="match status" value="1"/>
</dbReference>
<dbReference type="Gene3D" id="3.20.70.20">
    <property type="match status" value="1"/>
</dbReference>
<dbReference type="InterPro" id="IPR013346">
    <property type="entry name" value="NrdE_NrdA_C"/>
</dbReference>
<dbReference type="InterPro" id="IPR026459">
    <property type="entry name" value="RNR_1b_NrdE"/>
</dbReference>
<dbReference type="InterPro" id="IPR000788">
    <property type="entry name" value="RNR_lg_C"/>
</dbReference>
<dbReference type="InterPro" id="IPR013509">
    <property type="entry name" value="RNR_lsu_N"/>
</dbReference>
<dbReference type="InterPro" id="IPR013554">
    <property type="entry name" value="RNR_N"/>
</dbReference>
<dbReference type="InterPro" id="IPR008926">
    <property type="entry name" value="RNR_R1-su_N"/>
</dbReference>
<dbReference type="InterPro" id="IPR039718">
    <property type="entry name" value="Rrm1"/>
</dbReference>
<dbReference type="NCBIfam" id="TIGR02506">
    <property type="entry name" value="NrdE_NrdA"/>
    <property type="match status" value="1"/>
</dbReference>
<dbReference type="NCBIfam" id="TIGR04170">
    <property type="entry name" value="RNR_1b_NrdE"/>
    <property type="match status" value="1"/>
</dbReference>
<dbReference type="PANTHER" id="PTHR11573:SF30">
    <property type="entry name" value="RIBONUCLEOSIDE-DIPHOSPHATE REDUCTASE 2 SUBUNIT ALPHA"/>
    <property type="match status" value="1"/>
</dbReference>
<dbReference type="PANTHER" id="PTHR11573">
    <property type="entry name" value="RIBONUCLEOSIDE-DIPHOSPHATE REDUCTASE LARGE CHAIN"/>
    <property type="match status" value="1"/>
</dbReference>
<dbReference type="Pfam" id="PF02867">
    <property type="entry name" value="Ribonuc_red_lgC"/>
    <property type="match status" value="1"/>
</dbReference>
<dbReference type="Pfam" id="PF00317">
    <property type="entry name" value="Ribonuc_red_lgN"/>
    <property type="match status" value="1"/>
</dbReference>
<dbReference type="Pfam" id="PF08343">
    <property type="entry name" value="RNR_N"/>
    <property type="match status" value="1"/>
</dbReference>
<dbReference type="PRINTS" id="PR01183">
    <property type="entry name" value="RIBORDTASEM1"/>
</dbReference>
<dbReference type="SUPFAM" id="SSF51998">
    <property type="entry name" value="PFL-like glycyl radical enzymes"/>
    <property type="match status" value="1"/>
</dbReference>
<dbReference type="SUPFAM" id="SSF48168">
    <property type="entry name" value="R1 subunit of ribonucleotide reductase, N-terminal domain"/>
    <property type="match status" value="1"/>
</dbReference>
<dbReference type="PROSITE" id="PS00089">
    <property type="entry name" value="RIBORED_LARGE"/>
    <property type="match status" value="1"/>
</dbReference>
<evidence type="ECO:0000250" key="1"/>
<evidence type="ECO:0000305" key="2"/>